<name>LYPD8_HUMAN</name>
<proteinExistence type="evidence at protein level"/>
<protein>
    <recommendedName>
        <fullName evidence="5">Ly6/PLAUR domain-containing protein 8</fullName>
    </recommendedName>
</protein>
<gene>
    <name evidence="6" type="primary">LYPD8</name>
    <name evidence="4" type="ORF">UNQ511/PRO1026</name>
</gene>
<feature type="signal peptide" evidence="2">
    <location>
        <begin position="1"/>
        <end position="19"/>
    </location>
</feature>
<feature type="chain" id="PRO_0000317739" description="Ly6/PLAUR domain-containing protein 8">
    <location>
        <begin position="20"/>
        <end position="215"/>
    </location>
</feature>
<feature type="propeptide" id="PRO_0000317740" description="Removed in mature form" evidence="2">
    <location>
        <begin position="216"/>
        <end position="237"/>
    </location>
</feature>
<feature type="domain" description="UPAR/Ly6">
    <location>
        <begin position="125"/>
        <end position="176"/>
    </location>
</feature>
<feature type="lipid moiety-binding region" description="GPI-anchor amidated asparagine" evidence="2">
    <location>
        <position position="215"/>
    </location>
</feature>
<feature type="glycosylation site" description="N-linked (GlcNAc...) asparagine" evidence="2">
    <location>
        <position position="45"/>
    </location>
</feature>
<feature type="glycosylation site" description="N-linked (GlcNAc...) asparagine" evidence="2">
    <location>
        <position position="73"/>
    </location>
</feature>
<feature type="glycosylation site" description="N-linked (GlcNAc...) asparagine" evidence="2">
    <location>
        <position position="107"/>
    </location>
</feature>
<feature type="glycosylation site" description="N-linked (GlcNAc...) asparagine" evidence="2">
    <location>
        <position position="118"/>
    </location>
</feature>
<feature type="glycosylation site" description="N-linked (GlcNAc...) asparagine" evidence="2">
    <location>
        <position position="132"/>
    </location>
</feature>
<feature type="glycosylation site" description="N-linked (GlcNAc...) asparagine" evidence="2">
    <location>
        <position position="172"/>
    </location>
</feature>
<feature type="glycosylation site" description="N-linked (GlcNAc...) asparagine" evidence="2">
    <location>
        <position position="175"/>
    </location>
</feature>
<feature type="glycosylation site" description="N-linked (GlcNAc...) asparagine" evidence="2">
    <location>
        <position position="185"/>
    </location>
</feature>
<feature type="sequence conflict" description="In Ref. 1; AAQ88833 and 3; EAW57531." ref="1 3">
    <original>H</original>
    <variation>R</variation>
    <location>
        <position position="137"/>
    </location>
</feature>
<accession>Q6UX82</accession>
<accession>A0A075B722</accession>
<accession>K7ELG6</accession>
<reference key="1">
    <citation type="journal article" date="2003" name="Genome Res.">
        <title>The secreted protein discovery initiative (SPDI), a large-scale effort to identify novel human secreted and transmembrane proteins: a bioinformatics assessment.</title>
        <authorList>
            <person name="Clark H.F."/>
            <person name="Gurney A.L."/>
            <person name="Abaya E."/>
            <person name="Baker K."/>
            <person name="Baldwin D.T."/>
            <person name="Brush J."/>
            <person name="Chen J."/>
            <person name="Chow B."/>
            <person name="Chui C."/>
            <person name="Crowley C."/>
            <person name="Currell B."/>
            <person name="Deuel B."/>
            <person name="Dowd P."/>
            <person name="Eaton D."/>
            <person name="Foster J.S."/>
            <person name="Grimaldi C."/>
            <person name="Gu Q."/>
            <person name="Hass P.E."/>
            <person name="Heldens S."/>
            <person name="Huang A."/>
            <person name="Kim H.S."/>
            <person name="Klimowski L."/>
            <person name="Jin Y."/>
            <person name="Johnson S."/>
            <person name="Lee J."/>
            <person name="Lewis L."/>
            <person name="Liao D."/>
            <person name="Mark M.R."/>
            <person name="Robbie E."/>
            <person name="Sanchez C."/>
            <person name="Schoenfeld J."/>
            <person name="Seshagiri S."/>
            <person name="Simmons L."/>
            <person name="Singh J."/>
            <person name="Smith V."/>
            <person name="Stinson J."/>
            <person name="Vagts A."/>
            <person name="Vandlen R.L."/>
            <person name="Watanabe C."/>
            <person name="Wieand D."/>
            <person name="Woods K."/>
            <person name="Xie M.-H."/>
            <person name="Yansura D.G."/>
            <person name="Yi S."/>
            <person name="Yu G."/>
            <person name="Yuan J."/>
            <person name="Zhang M."/>
            <person name="Zhang Z."/>
            <person name="Goddard A.D."/>
            <person name="Wood W.I."/>
            <person name="Godowski P.J."/>
            <person name="Gray A.M."/>
        </authorList>
    </citation>
    <scope>NUCLEOTIDE SEQUENCE [LARGE SCALE MRNA]</scope>
</reference>
<reference key="2">
    <citation type="journal article" date="2006" name="Nature">
        <title>The DNA sequence and biological annotation of human chromosome 1.</title>
        <authorList>
            <person name="Gregory S.G."/>
            <person name="Barlow K.F."/>
            <person name="McLay K.E."/>
            <person name="Kaul R."/>
            <person name="Swarbreck D."/>
            <person name="Dunham A."/>
            <person name="Scott C.E."/>
            <person name="Howe K.L."/>
            <person name="Woodfine K."/>
            <person name="Spencer C.C.A."/>
            <person name="Jones M.C."/>
            <person name="Gillson C."/>
            <person name="Searle S."/>
            <person name="Zhou Y."/>
            <person name="Kokocinski F."/>
            <person name="McDonald L."/>
            <person name="Evans R."/>
            <person name="Phillips K."/>
            <person name="Atkinson A."/>
            <person name="Cooper R."/>
            <person name="Jones C."/>
            <person name="Hall R.E."/>
            <person name="Andrews T.D."/>
            <person name="Lloyd C."/>
            <person name="Ainscough R."/>
            <person name="Almeida J.P."/>
            <person name="Ambrose K.D."/>
            <person name="Anderson F."/>
            <person name="Andrew R.W."/>
            <person name="Ashwell R.I.S."/>
            <person name="Aubin K."/>
            <person name="Babbage A.K."/>
            <person name="Bagguley C.L."/>
            <person name="Bailey J."/>
            <person name="Beasley H."/>
            <person name="Bethel G."/>
            <person name="Bird C.P."/>
            <person name="Bray-Allen S."/>
            <person name="Brown J.Y."/>
            <person name="Brown A.J."/>
            <person name="Buckley D."/>
            <person name="Burton J."/>
            <person name="Bye J."/>
            <person name="Carder C."/>
            <person name="Chapman J.C."/>
            <person name="Clark S.Y."/>
            <person name="Clarke G."/>
            <person name="Clee C."/>
            <person name="Cobley V."/>
            <person name="Collier R.E."/>
            <person name="Corby N."/>
            <person name="Coville G.J."/>
            <person name="Davies J."/>
            <person name="Deadman R."/>
            <person name="Dunn M."/>
            <person name="Earthrowl M."/>
            <person name="Ellington A.G."/>
            <person name="Errington H."/>
            <person name="Frankish A."/>
            <person name="Frankland J."/>
            <person name="French L."/>
            <person name="Garner P."/>
            <person name="Garnett J."/>
            <person name="Gay L."/>
            <person name="Ghori M.R.J."/>
            <person name="Gibson R."/>
            <person name="Gilby L.M."/>
            <person name="Gillett W."/>
            <person name="Glithero R.J."/>
            <person name="Grafham D.V."/>
            <person name="Griffiths C."/>
            <person name="Griffiths-Jones S."/>
            <person name="Grocock R."/>
            <person name="Hammond S."/>
            <person name="Harrison E.S.I."/>
            <person name="Hart E."/>
            <person name="Haugen E."/>
            <person name="Heath P.D."/>
            <person name="Holmes S."/>
            <person name="Holt K."/>
            <person name="Howden P.J."/>
            <person name="Hunt A.R."/>
            <person name="Hunt S.E."/>
            <person name="Hunter G."/>
            <person name="Isherwood J."/>
            <person name="James R."/>
            <person name="Johnson C."/>
            <person name="Johnson D."/>
            <person name="Joy A."/>
            <person name="Kay M."/>
            <person name="Kershaw J.K."/>
            <person name="Kibukawa M."/>
            <person name="Kimberley A.M."/>
            <person name="King A."/>
            <person name="Knights A.J."/>
            <person name="Lad H."/>
            <person name="Laird G."/>
            <person name="Lawlor S."/>
            <person name="Leongamornlert D.A."/>
            <person name="Lloyd D.M."/>
            <person name="Loveland J."/>
            <person name="Lovell J."/>
            <person name="Lush M.J."/>
            <person name="Lyne R."/>
            <person name="Martin S."/>
            <person name="Mashreghi-Mohammadi M."/>
            <person name="Matthews L."/>
            <person name="Matthews N.S.W."/>
            <person name="McLaren S."/>
            <person name="Milne S."/>
            <person name="Mistry S."/>
            <person name="Moore M.J.F."/>
            <person name="Nickerson T."/>
            <person name="O'Dell C.N."/>
            <person name="Oliver K."/>
            <person name="Palmeiri A."/>
            <person name="Palmer S.A."/>
            <person name="Parker A."/>
            <person name="Patel D."/>
            <person name="Pearce A.V."/>
            <person name="Peck A.I."/>
            <person name="Pelan S."/>
            <person name="Phelps K."/>
            <person name="Phillimore B.J."/>
            <person name="Plumb R."/>
            <person name="Rajan J."/>
            <person name="Raymond C."/>
            <person name="Rouse G."/>
            <person name="Saenphimmachak C."/>
            <person name="Sehra H.K."/>
            <person name="Sheridan E."/>
            <person name="Shownkeen R."/>
            <person name="Sims S."/>
            <person name="Skuce C.D."/>
            <person name="Smith M."/>
            <person name="Steward C."/>
            <person name="Subramanian S."/>
            <person name="Sycamore N."/>
            <person name="Tracey A."/>
            <person name="Tromans A."/>
            <person name="Van Helmond Z."/>
            <person name="Wall M."/>
            <person name="Wallis J.M."/>
            <person name="White S."/>
            <person name="Whitehead S.L."/>
            <person name="Wilkinson J.E."/>
            <person name="Willey D.L."/>
            <person name="Williams H."/>
            <person name="Wilming L."/>
            <person name="Wray P.W."/>
            <person name="Wu Z."/>
            <person name="Coulson A."/>
            <person name="Vaudin M."/>
            <person name="Sulston J.E."/>
            <person name="Durbin R.M."/>
            <person name="Hubbard T."/>
            <person name="Wooster R."/>
            <person name="Dunham I."/>
            <person name="Carter N.P."/>
            <person name="McVean G."/>
            <person name="Ross M.T."/>
            <person name="Harrow J."/>
            <person name="Olson M.V."/>
            <person name="Beck S."/>
            <person name="Rogers J."/>
            <person name="Bentley D.R."/>
        </authorList>
    </citation>
    <scope>NUCLEOTIDE SEQUENCE [LARGE SCALE GENOMIC DNA]</scope>
</reference>
<reference key="3">
    <citation type="submission" date="2005-07" db="EMBL/GenBank/DDBJ databases">
        <authorList>
            <person name="Mural R.J."/>
            <person name="Istrail S."/>
            <person name="Sutton G.G."/>
            <person name="Florea L."/>
            <person name="Halpern A.L."/>
            <person name="Mobarry C.M."/>
            <person name="Lippert R."/>
            <person name="Walenz B."/>
            <person name="Shatkay H."/>
            <person name="Dew I."/>
            <person name="Miller J.R."/>
            <person name="Flanigan M.J."/>
            <person name="Edwards N.J."/>
            <person name="Bolanos R."/>
            <person name="Fasulo D."/>
            <person name="Halldorsson B.V."/>
            <person name="Hannenhalli S."/>
            <person name="Turner R."/>
            <person name="Yooseph S."/>
            <person name="Lu F."/>
            <person name="Nusskern D.R."/>
            <person name="Shue B.C."/>
            <person name="Zheng X.H."/>
            <person name="Zhong F."/>
            <person name="Delcher A.L."/>
            <person name="Huson D.H."/>
            <person name="Kravitz S.A."/>
            <person name="Mouchard L."/>
            <person name="Reinert K."/>
            <person name="Remington K.A."/>
            <person name="Clark A.G."/>
            <person name="Waterman M.S."/>
            <person name="Eichler E.E."/>
            <person name="Adams M.D."/>
            <person name="Hunkapiller M.W."/>
            <person name="Myers E.W."/>
            <person name="Venter J.C."/>
        </authorList>
    </citation>
    <scope>NUCLEOTIDE SEQUENCE [LARGE SCALE GENOMIC DNA]</scope>
</reference>
<reference key="4">
    <citation type="journal article" date="2016" name="Nature">
        <title>Lypd8 promotes the segregation of flagellated microbiota and colonic epithelia.</title>
        <authorList>
            <person name="Okumura R."/>
            <person name="Kurakawa T."/>
            <person name="Nakano T."/>
            <person name="Kayama H."/>
            <person name="Kinoshita M."/>
            <person name="Motooka D."/>
            <person name="Gotoh K."/>
            <person name="Kimura T."/>
            <person name="Kamiyama N."/>
            <person name="Kusu T."/>
            <person name="Ueda Y."/>
            <person name="Wu H."/>
            <person name="Iijima H."/>
            <person name="Barman S."/>
            <person name="Osawa H."/>
            <person name="Matsuno H."/>
            <person name="Nishimura J."/>
            <person name="Ohba Y."/>
            <person name="Nakamura S."/>
            <person name="Iida T."/>
            <person name="Yamamoto M."/>
            <person name="Umemoto E."/>
            <person name="Sano K."/>
            <person name="Takeda K."/>
        </authorList>
    </citation>
    <scope>TISSUE SPECIFICITY</scope>
</reference>
<organism>
    <name type="scientific">Homo sapiens</name>
    <name type="common">Human</name>
    <dbReference type="NCBI Taxonomy" id="9606"/>
    <lineage>
        <taxon>Eukaryota</taxon>
        <taxon>Metazoa</taxon>
        <taxon>Chordata</taxon>
        <taxon>Craniata</taxon>
        <taxon>Vertebrata</taxon>
        <taxon>Euteleostomi</taxon>
        <taxon>Mammalia</taxon>
        <taxon>Eutheria</taxon>
        <taxon>Euarchontoglires</taxon>
        <taxon>Primates</taxon>
        <taxon>Haplorrhini</taxon>
        <taxon>Catarrhini</taxon>
        <taxon>Hominidae</taxon>
        <taxon>Homo</taxon>
    </lineage>
</organism>
<evidence type="ECO:0000250" key="1">
    <source>
        <dbReference type="UniProtKB" id="Q9D7S0"/>
    </source>
</evidence>
<evidence type="ECO:0000255" key="2"/>
<evidence type="ECO:0000269" key="3">
    <source>
    </source>
</evidence>
<evidence type="ECO:0000303" key="4">
    <source>
    </source>
</evidence>
<evidence type="ECO:0000305" key="5"/>
<evidence type="ECO:0000312" key="6">
    <source>
        <dbReference type="HGNC" id="HGNC:44208"/>
    </source>
</evidence>
<sequence length="237" mass="25265">MKGILVAGITAVLVAAVESLSCVQCNSWEKSCVNSIASECPSHANTSCISSSASSSLETPVRLYQNMFCSAENCSEETHITAFTVHVSAEEHFHFVSQCCQGKECSNTSDALDPPLKNVSSNAECPACYESNGTSCHGKPWKCYEEEQCVFLVAELKNDIESKSLVLKGCSNVSNATCQFLSGENKTLGGVIFRKFECANVNSLTPTSAPTTSHNVGSKASLYLLALASLLLRGLLP</sequence>
<keyword id="KW-1003">Cell membrane</keyword>
<keyword id="KW-0325">Glycoprotein</keyword>
<keyword id="KW-0336">GPI-anchor</keyword>
<keyword id="KW-0449">Lipoprotein</keyword>
<keyword id="KW-0472">Membrane</keyword>
<keyword id="KW-1267">Proteomics identification</keyword>
<keyword id="KW-1185">Reference proteome</keyword>
<keyword id="KW-0964">Secreted</keyword>
<keyword id="KW-0732">Signal</keyword>
<dbReference type="EMBL" id="AY358469">
    <property type="protein sequence ID" value="AAQ88833.1"/>
    <property type="molecule type" value="mRNA"/>
</dbReference>
<dbReference type="EMBL" id="AEKP01210869">
    <property type="status" value="NOT_ANNOTATED_CDS"/>
    <property type="molecule type" value="Genomic_DNA"/>
</dbReference>
<dbReference type="EMBL" id="CR589904">
    <property type="status" value="NOT_ANNOTATED_CDS"/>
    <property type="molecule type" value="Genomic_DNA"/>
</dbReference>
<dbReference type="EMBL" id="FP476111">
    <property type="status" value="NOT_ANNOTATED_CDS"/>
    <property type="molecule type" value="Genomic_DNA"/>
</dbReference>
<dbReference type="EMBL" id="FP885904">
    <property type="status" value="NOT_ANNOTATED_CDS"/>
    <property type="molecule type" value="Genomic_DNA"/>
</dbReference>
<dbReference type="EMBL" id="CH471257">
    <property type="protein sequence ID" value="EAW57531.1"/>
    <property type="molecule type" value="Genomic_DNA"/>
</dbReference>
<dbReference type="CCDS" id="CCDS73059.1"/>
<dbReference type="RefSeq" id="NP_001078943.2">
    <property type="nucleotide sequence ID" value="NM_001085474.2"/>
</dbReference>
<dbReference type="RefSeq" id="NP_001278212.2">
    <property type="nucleotide sequence ID" value="NM_001291283.2"/>
</dbReference>
<dbReference type="FunCoup" id="Q6UX82">
    <property type="interactions" value="3"/>
</dbReference>
<dbReference type="STRING" id="9606.ENSP00000466070"/>
<dbReference type="GlyCosmos" id="Q6UX82">
    <property type="glycosylation" value="8 sites, No reported glycans"/>
</dbReference>
<dbReference type="GlyGen" id="Q6UX82">
    <property type="glycosylation" value="8 sites"/>
</dbReference>
<dbReference type="iPTMnet" id="Q6UX82"/>
<dbReference type="PhosphoSitePlus" id="Q6UX82"/>
<dbReference type="BioMuta" id="LYPD8"/>
<dbReference type="DMDM" id="74738190"/>
<dbReference type="MassIVE" id="Q6UX82"/>
<dbReference type="PaxDb" id="9606-ENSP00000466070"/>
<dbReference type="PeptideAtlas" id="Q6UX82"/>
<dbReference type="ProteomicsDB" id="67577"/>
<dbReference type="Antibodypedia" id="75553">
    <property type="antibodies" value="21 antibodies from 5 providers"/>
</dbReference>
<dbReference type="DNASU" id="646627"/>
<dbReference type="Ensembl" id="ENST00000590317.4">
    <property type="protein sequence ID" value="ENSP00000466070.2"/>
    <property type="gene ID" value="ENSG00000259823.6"/>
</dbReference>
<dbReference type="GeneID" id="646627"/>
<dbReference type="KEGG" id="hsa:646627"/>
<dbReference type="MANE-Select" id="ENST00000590317.4">
    <property type="protein sequence ID" value="ENSP00000466070.2"/>
    <property type="RefSeq nucleotide sequence ID" value="NM_001085474.2"/>
    <property type="RefSeq protein sequence ID" value="NP_001078943.2"/>
</dbReference>
<dbReference type="UCSC" id="uc031vuv.2">
    <property type="organism name" value="human"/>
</dbReference>
<dbReference type="AGR" id="HGNC:44208"/>
<dbReference type="CTD" id="646627"/>
<dbReference type="DisGeNET" id="646627"/>
<dbReference type="GeneCards" id="LYPD8"/>
<dbReference type="HGNC" id="HGNC:44208">
    <property type="gene designation" value="LYPD8"/>
</dbReference>
<dbReference type="HPA" id="ENSG00000259823">
    <property type="expression patterns" value="Tissue enriched (intestine)"/>
</dbReference>
<dbReference type="neXtProt" id="NX_Q6UX82"/>
<dbReference type="OpenTargets" id="ENSG00000259823"/>
<dbReference type="VEuPathDB" id="HostDB:ENSG00000259823"/>
<dbReference type="eggNOG" id="ENOG502TBDM">
    <property type="taxonomic scope" value="Eukaryota"/>
</dbReference>
<dbReference type="GeneTree" id="ENSGT00570000079564"/>
<dbReference type="InParanoid" id="Q6UX82"/>
<dbReference type="OMA" id="FHFASQC"/>
<dbReference type="OrthoDB" id="9838086at2759"/>
<dbReference type="PAN-GO" id="Q6UX82">
    <property type="GO annotations" value="2 GO annotations based on evolutionary models"/>
</dbReference>
<dbReference type="PhylomeDB" id="Q6UX82"/>
<dbReference type="PathwayCommons" id="Q6UX82"/>
<dbReference type="Reactome" id="R-HSA-163125">
    <property type="pathway name" value="Post-translational modification: synthesis of GPI-anchored proteins"/>
</dbReference>
<dbReference type="BioGRID-ORCS" id="646627">
    <property type="hits" value="7 hits in 279 CRISPR screens"/>
</dbReference>
<dbReference type="ChiTaRS" id="LYPD8">
    <property type="organism name" value="human"/>
</dbReference>
<dbReference type="GenomeRNAi" id="646627"/>
<dbReference type="Pharos" id="Q6UX82">
    <property type="development level" value="Tdark"/>
</dbReference>
<dbReference type="PRO" id="PR:Q6UX82"/>
<dbReference type="Proteomes" id="UP000005640">
    <property type="component" value="Chromosome 1"/>
</dbReference>
<dbReference type="RNAct" id="Q6UX82">
    <property type="molecule type" value="protein"/>
</dbReference>
<dbReference type="Bgee" id="ENSG00000259823">
    <property type="expression patterns" value="Expressed in rectum and 69 other cell types or tissues"/>
</dbReference>
<dbReference type="GO" id="GO:0005576">
    <property type="term" value="C:extracellular region"/>
    <property type="evidence" value="ECO:0000304"/>
    <property type="project" value="Reactome"/>
</dbReference>
<dbReference type="GO" id="GO:0005615">
    <property type="term" value="C:extracellular space"/>
    <property type="evidence" value="ECO:0000250"/>
    <property type="project" value="UniProtKB"/>
</dbReference>
<dbReference type="GO" id="GO:0005886">
    <property type="term" value="C:plasma membrane"/>
    <property type="evidence" value="ECO:0000304"/>
    <property type="project" value="Reactome"/>
</dbReference>
<dbReference type="GO" id="GO:0098552">
    <property type="term" value="C:side of membrane"/>
    <property type="evidence" value="ECO:0007669"/>
    <property type="project" value="UniProtKB-KW"/>
</dbReference>
<dbReference type="GO" id="GO:0050829">
    <property type="term" value="P:defense response to Gram-negative bacterium"/>
    <property type="evidence" value="ECO:0000250"/>
    <property type="project" value="UniProtKB"/>
</dbReference>
<dbReference type="CDD" id="cd23568">
    <property type="entry name" value="TFP_LU_ECD_LYPD8_rpt1"/>
    <property type="match status" value="1"/>
</dbReference>
<dbReference type="CDD" id="cd23569">
    <property type="entry name" value="TFP_LU_ECD_LYPD8_rpt2"/>
    <property type="match status" value="1"/>
</dbReference>
<dbReference type="InterPro" id="IPR050918">
    <property type="entry name" value="CNF-like_PLA2_Inhibitor"/>
</dbReference>
<dbReference type="PANTHER" id="PTHR20914">
    <property type="entry name" value="LY6/PLAUR DOMAIN-CONTAINING PROTEIN 8"/>
    <property type="match status" value="1"/>
</dbReference>
<dbReference type="PANTHER" id="PTHR20914:SF2">
    <property type="entry name" value="LY6_PLAUR DOMAIN-CONTAINING PROTEIN 8"/>
    <property type="match status" value="1"/>
</dbReference>
<comment type="function">
    <text evidence="1">Secreted protein specifically required to prevent invasion of Gram-negative bacteria in the inner mucus layer of the colon epithelium, a portion of the large intestine which is free of commensal microbiota. Prevents invasion of flagellated microbiota by binding to the flagellum of bacteria, such as P.mirabilis, thereby inhibiting bacterial motility in the intestinal lumen. Segregation of intestinal bacteria and epithelial cells in the colon is required to preserve intestinal homeostasis.</text>
</comment>
<comment type="subcellular location">
    <subcellularLocation>
        <location evidence="1">Cell membrane</location>
        <topology evidence="1">Lipid-anchor</topology>
        <topology evidence="1">GPI-anchor</topology>
    </subcellularLocation>
    <subcellularLocation>
        <location evidence="1">Secreted</location>
    </subcellularLocation>
    <text evidence="1">Secreted into the lumen of the colon following cleavage of the GPI-anchor.</text>
</comment>
<comment type="tissue specificity">
    <text evidence="3">Expressed in the large intestine. Preferentially expressed on the epithelial layer exposed to the lumen (at protein level).</text>
</comment>
<comment type="PTM">
    <text evidence="1">Highly N-glycosylated. Not O-glycosylated.</text>
</comment>
<comment type="PTM">
    <text evidence="1">GPI-anchored. The GPI-anchor is cleaved, leading to secretion into the colonic lumen.</text>
</comment>
<comment type="similarity">
    <text evidence="5">Belongs to the CNF-like-inhibitor family.</text>
</comment>